<gene>
    <name evidence="1" type="primary">trpD</name>
    <name type="ordered locus">RHE_CH02174</name>
</gene>
<dbReference type="EC" id="2.4.2.18" evidence="1"/>
<dbReference type="EMBL" id="CP000133">
    <property type="protein sequence ID" value="ABC90956.1"/>
    <property type="molecule type" value="Genomic_DNA"/>
</dbReference>
<dbReference type="RefSeq" id="WP_011425437.1">
    <property type="nucleotide sequence ID" value="NC_007761.1"/>
</dbReference>
<dbReference type="SMR" id="Q2K880"/>
<dbReference type="KEGG" id="ret:RHE_CH02174"/>
<dbReference type="eggNOG" id="COG0547">
    <property type="taxonomic scope" value="Bacteria"/>
</dbReference>
<dbReference type="HOGENOM" id="CLU_034315_2_1_5"/>
<dbReference type="OrthoDB" id="9806430at2"/>
<dbReference type="UniPathway" id="UPA00035">
    <property type="reaction ID" value="UER00041"/>
</dbReference>
<dbReference type="Proteomes" id="UP000001936">
    <property type="component" value="Chromosome"/>
</dbReference>
<dbReference type="GO" id="GO:0005829">
    <property type="term" value="C:cytosol"/>
    <property type="evidence" value="ECO:0007669"/>
    <property type="project" value="TreeGrafter"/>
</dbReference>
<dbReference type="GO" id="GO:0004048">
    <property type="term" value="F:anthranilate phosphoribosyltransferase activity"/>
    <property type="evidence" value="ECO:0007669"/>
    <property type="project" value="UniProtKB-UniRule"/>
</dbReference>
<dbReference type="GO" id="GO:0000287">
    <property type="term" value="F:magnesium ion binding"/>
    <property type="evidence" value="ECO:0007669"/>
    <property type="project" value="UniProtKB-UniRule"/>
</dbReference>
<dbReference type="GO" id="GO:0000162">
    <property type="term" value="P:L-tryptophan biosynthetic process"/>
    <property type="evidence" value="ECO:0007669"/>
    <property type="project" value="UniProtKB-UniRule"/>
</dbReference>
<dbReference type="FunFam" id="3.40.1030.10:FF:000002">
    <property type="entry name" value="Anthranilate phosphoribosyltransferase"/>
    <property type="match status" value="1"/>
</dbReference>
<dbReference type="Gene3D" id="3.40.1030.10">
    <property type="entry name" value="Nucleoside phosphorylase/phosphoribosyltransferase catalytic domain"/>
    <property type="match status" value="1"/>
</dbReference>
<dbReference type="Gene3D" id="1.20.970.10">
    <property type="entry name" value="Transferase, Pyrimidine Nucleoside Phosphorylase, Chain C"/>
    <property type="match status" value="1"/>
</dbReference>
<dbReference type="HAMAP" id="MF_00211">
    <property type="entry name" value="TrpD"/>
    <property type="match status" value="1"/>
</dbReference>
<dbReference type="InterPro" id="IPR005940">
    <property type="entry name" value="Anthranilate_Pribosyl_Tfrase"/>
</dbReference>
<dbReference type="InterPro" id="IPR000312">
    <property type="entry name" value="Glycosyl_Trfase_fam3"/>
</dbReference>
<dbReference type="InterPro" id="IPR017459">
    <property type="entry name" value="Glycosyl_Trfase_fam3_N_dom"/>
</dbReference>
<dbReference type="InterPro" id="IPR036320">
    <property type="entry name" value="Glycosyl_Trfase_fam3_N_dom_sf"/>
</dbReference>
<dbReference type="InterPro" id="IPR035902">
    <property type="entry name" value="Nuc_phospho_transferase"/>
</dbReference>
<dbReference type="NCBIfam" id="TIGR01245">
    <property type="entry name" value="trpD"/>
    <property type="match status" value="1"/>
</dbReference>
<dbReference type="PANTHER" id="PTHR43285">
    <property type="entry name" value="ANTHRANILATE PHOSPHORIBOSYLTRANSFERASE"/>
    <property type="match status" value="1"/>
</dbReference>
<dbReference type="PANTHER" id="PTHR43285:SF2">
    <property type="entry name" value="ANTHRANILATE PHOSPHORIBOSYLTRANSFERASE"/>
    <property type="match status" value="1"/>
</dbReference>
<dbReference type="Pfam" id="PF02885">
    <property type="entry name" value="Glycos_trans_3N"/>
    <property type="match status" value="1"/>
</dbReference>
<dbReference type="Pfam" id="PF00591">
    <property type="entry name" value="Glycos_transf_3"/>
    <property type="match status" value="1"/>
</dbReference>
<dbReference type="SUPFAM" id="SSF52418">
    <property type="entry name" value="Nucleoside phosphorylase/phosphoribosyltransferase catalytic domain"/>
    <property type="match status" value="1"/>
</dbReference>
<dbReference type="SUPFAM" id="SSF47648">
    <property type="entry name" value="Nucleoside phosphorylase/phosphoribosyltransferase N-terminal domain"/>
    <property type="match status" value="1"/>
</dbReference>
<evidence type="ECO:0000255" key="1">
    <source>
        <dbReference type="HAMAP-Rule" id="MF_00211"/>
    </source>
</evidence>
<protein>
    <recommendedName>
        <fullName evidence="1">Anthranilate phosphoribosyltransferase</fullName>
        <ecNumber evidence="1">2.4.2.18</ecNumber>
    </recommendedName>
</protein>
<reference key="1">
    <citation type="journal article" date="2006" name="Proc. Natl. Acad. Sci. U.S.A.">
        <title>The partitioned Rhizobium etli genome: genetic and metabolic redundancy in seven interacting replicons.</title>
        <authorList>
            <person name="Gonzalez V."/>
            <person name="Santamaria R.I."/>
            <person name="Bustos P."/>
            <person name="Hernandez-Gonzalez I."/>
            <person name="Medrano-Soto A."/>
            <person name="Moreno-Hagelsieb G."/>
            <person name="Janga S.C."/>
            <person name="Ramirez M.A."/>
            <person name="Jimenez-Jacinto V."/>
            <person name="Collado-Vides J."/>
            <person name="Davila G."/>
        </authorList>
    </citation>
    <scope>NUCLEOTIDE SEQUENCE [LARGE SCALE GENOMIC DNA]</scope>
    <source>
        <strain>ATCC 51251 / DSM 11541 / JCM 21823 / NBRC 15573 / CFN 42</strain>
    </source>
</reference>
<keyword id="KW-0028">Amino-acid biosynthesis</keyword>
<keyword id="KW-0057">Aromatic amino acid biosynthesis</keyword>
<keyword id="KW-0328">Glycosyltransferase</keyword>
<keyword id="KW-0460">Magnesium</keyword>
<keyword id="KW-0479">Metal-binding</keyword>
<keyword id="KW-1185">Reference proteome</keyword>
<keyword id="KW-0808">Transferase</keyword>
<keyword id="KW-0822">Tryptophan biosynthesis</keyword>
<accession>Q2K880</accession>
<name>TRPD_RHIEC</name>
<sequence>MTDLKPFLAKVASREPLTRDEARAAFDILMSGQATPSQIGGFLMALRVRGESVDEIVGAVTTMRSKMLTVEAPADAIDIVGTGGDASGTYNISTLAALIVAGAGVPVAKHGNRALSSKSGAADNLSALGVNIDVGPEIISRCIAEASVGFMFAQLHHSAMRHVGPSRVELGTRTIFNLLGPLSNPAGVRRQLLGVFSPQWLVPLAEVMRDLGSECVWVVHGDGLDEITTTGITKVAALEDGKIRSFELSPADFGVSPCVLADIKGGDGVANAAALREVLGGAKNAYRDVSLANAAASLVISGKVETIRDGMKLAAHSLDSGATALALDKLIAVSNDID</sequence>
<comment type="function">
    <text evidence="1">Catalyzes the transfer of the phosphoribosyl group of 5-phosphorylribose-1-pyrophosphate (PRPP) to anthranilate to yield N-(5'-phosphoribosyl)-anthranilate (PRA).</text>
</comment>
<comment type="catalytic activity">
    <reaction evidence="1">
        <text>N-(5-phospho-beta-D-ribosyl)anthranilate + diphosphate = 5-phospho-alpha-D-ribose 1-diphosphate + anthranilate</text>
        <dbReference type="Rhea" id="RHEA:11768"/>
        <dbReference type="ChEBI" id="CHEBI:16567"/>
        <dbReference type="ChEBI" id="CHEBI:18277"/>
        <dbReference type="ChEBI" id="CHEBI:33019"/>
        <dbReference type="ChEBI" id="CHEBI:58017"/>
        <dbReference type="EC" id="2.4.2.18"/>
    </reaction>
</comment>
<comment type="cofactor">
    <cofactor evidence="1">
        <name>Mg(2+)</name>
        <dbReference type="ChEBI" id="CHEBI:18420"/>
    </cofactor>
    <text evidence="1">Binds 2 magnesium ions per monomer.</text>
</comment>
<comment type="pathway">
    <text evidence="1">Amino-acid biosynthesis; L-tryptophan biosynthesis; L-tryptophan from chorismate: step 2/5.</text>
</comment>
<comment type="subunit">
    <text evidence="1">Homodimer.</text>
</comment>
<comment type="similarity">
    <text evidence="1">Belongs to the anthranilate phosphoribosyltransferase family.</text>
</comment>
<feature type="chain" id="PRO_1000043054" description="Anthranilate phosphoribosyltransferase">
    <location>
        <begin position="1"/>
        <end position="338"/>
    </location>
</feature>
<feature type="binding site" evidence="1">
    <location>
        <position position="81"/>
    </location>
    <ligand>
        <name>5-phospho-alpha-D-ribose 1-diphosphate</name>
        <dbReference type="ChEBI" id="CHEBI:58017"/>
    </ligand>
</feature>
<feature type="binding site" evidence="1">
    <location>
        <position position="81"/>
    </location>
    <ligand>
        <name>anthranilate</name>
        <dbReference type="ChEBI" id="CHEBI:16567"/>
        <label>1</label>
    </ligand>
</feature>
<feature type="binding site" evidence="1">
    <location>
        <begin position="84"/>
        <end position="85"/>
    </location>
    <ligand>
        <name>5-phospho-alpha-D-ribose 1-diphosphate</name>
        <dbReference type="ChEBI" id="CHEBI:58017"/>
    </ligand>
</feature>
<feature type="binding site" evidence="1">
    <location>
        <position position="89"/>
    </location>
    <ligand>
        <name>5-phospho-alpha-D-ribose 1-diphosphate</name>
        <dbReference type="ChEBI" id="CHEBI:58017"/>
    </ligand>
</feature>
<feature type="binding site" evidence="1">
    <location>
        <begin position="91"/>
        <end position="94"/>
    </location>
    <ligand>
        <name>5-phospho-alpha-D-ribose 1-diphosphate</name>
        <dbReference type="ChEBI" id="CHEBI:58017"/>
    </ligand>
</feature>
<feature type="binding site" evidence="1">
    <location>
        <position position="93"/>
    </location>
    <ligand>
        <name>Mg(2+)</name>
        <dbReference type="ChEBI" id="CHEBI:18420"/>
        <label>1</label>
    </ligand>
</feature>
<feature type="binding site" evidence="1">
    <location>
        <begin position="109"/>
        <end position="117"/>
    </location>
    <ligand>
        <name>5-phospho-alpha-D-ribose 1-diphosphate</name>
        <dbReference type="ChEBI" id="CHEBI:58017"/>
    </ligand>
</feature>
<feature type="binding site" evidence="1">
    <location>
        <position position="112"/>
    </location>
    <ligand>
        <name>anthranilate</name>
        <dbReference type="ChEBI" id="CHEBI:16567"/>
        <label>1</label>
    </ligand>
</feature>
<feature type="binding site" evidence="1">
    <location>
        <position position="121"/>
    </location>
    <ligand>
        <name>5-phospho-alpha-D-ribose 1-diphosphate</name>
        <dbReference type="ChEBI" id="CHEBI:58017"/>
    </ligand>
</feature>
<feature type="binding site" evidence="1">
    <location>
        <position position="167"/>
    </location>
    <ligand>
        <name>anthranilate</name>
        <dbReference type="ChEBI" id="CHEBI:16567"/>
        <label>2</label>
    </ligand>
</feature>
<feature type="binding site" evidence="1">
    <location>
        <position position="225"/>
    </location>
    <ligand>
        <name>Mg(2+)</name>
        <dbReference type="ChEBI" id="CHEBI:18420"/>
        <label>2</label>
    </ligand>
</feature>
<feature type="binding site" evidence="1">
    <location>
        <position position="226"/>
    </location>
    <ligand>
        <name>Mg(2+)</name>
        <dbReference type="ChEBI" id="CHEBI:18420"/>
        <label>1</label>
    </ligand>
</feature>
<feature type="binding site" evidence="1">
    <location>
        <position position="226"/>
    </location>
    <ligand>
        <name>Mg(2+)</name>
        <dbReference type="ChEBI" id="CHEBI:18420"/>
        <label>2</label>
    </ligand>
</feature>
<proteinExistence type="inferred from homology"/>
<organism>
    <name type="scientific">Rhizobium etli (strain ATCC 51251 / DSM 11541 / JCM 21823 / NBRC 15573 / CFN 42)</name>
    <dbReference type="NCBI Taxonomy" id="347834"/>
    <lineage>
        <taxon>Bacteria</taxon>
        <taxon>Pseudomonadati</taxon>
        <taxon>Pseudomonadota</taxon>
        <taxon>Alphaproteobacteria</taxon>
        <taxon>Hyphomicrobiales</taxon>
        <taxon>Rhizobiaceae</taxon>
        <taxon>Rhizobium/Agrobacterium group</taxon>
        <taxon>Rhizobium</taxon>
    </lineage>
</organism>